<sequence>MRDELVWIDCEMTGLDLGSDKLIEIAALVTDAELNVLGDGVDVVIHADDAALAAMGEVVTEMHSRSGLIDEVKASTVDLATAEEMVLDYIRTHVKAPKTAPLAGNSIATDRAFIVRDMPALDAYLHYRMIDVSSIKELCRRWYPRIYFGQPVKGLTHRALADIHESIRELQFYRRTAFVAPPGPSTSEIEAVAAALDEGKDAPGPSDSASAPPTG</sequence>
<reference key="1">
    <citation type="journal article" date="2005" name="Proc. Natl. Acad. Sci. U.S.A.">
        <title>The complete genome sequence of Mycobacterium avium subspecies paratuberculosis.</title>
        <authorList>
            <person name="Li L."/>
            <person name="Bannantine J.P."/>
            <person name="Zhang Q."/>
            <person name="Amonsin A."/>
            <person name="May B.J."/>
            <person name="Alt D."/>
            <person name="Banerji N."/>
            <person name="Kanjilal S."/>
            <person name="Kapur V."/>
        </authorList>
    </citation>
    <scope>NUCLEOTIDE SEQUENCE [LARGE SCALE GENOMIC DNA]</scope>
    <source>
        <strain>ATCC BAA-968 / K-10</strain>
    </source>
</reference>
<feature type="chain" id="PRO_0000111050" description="Oligoribonuclease">
    <location>
        <begin position="1"/>
        <end position="215"/>
    </location>
</feature>
<feature type="domain" description="Exonuclease" evidence="1">
    <location>
        <begin position="5"/>
        <end position="170"/>
    </location>
</feature>
<feature type="region of interest" description="Disordered" evidence="2">
    <location>
        <begin position="196"/>
        <end position="215"/>
    </location>
</feature>
<feature type="compositionally biased region" description="Low complexity" evidence="2">
    <location>
        <begin position="202"/>
        <end position="215"/>
    </location>
</feature>
<feature type="active site" evidence="1">
    <location>
        <position position="127"/>
    </location>
</feature>
<accession>P61651</accession>
<protein>
    <recommendedName>
        <fullName evidence="1">Oligoribonuclease</fullName>
        <ecNumber evidence="1">3.1.15.-</ecNumber>
    </recommendedName>
</protein>
<organism>
    <name type="scientific">Mycolicibacterium paratuberculosis (strain ATCC BAA-968 / K-10)</name>
    <name type="common">Mycobacterium paratuberculosis</name>
    <dbReference type="NCBI Taxonomy" id="262316"/>
    <lineage>
        <taxon>Bacteria</taxon>
        <taxon>Bacillati</taxon>
        <taxon>Actinomycetota</taxon>
        <taxon>Actinomycetes</taxon>
        <taxon>Mycobacteriales</taxon>
        <taxon>Mycobacteriaceae</taxon>
        <taxon>Mycobacterium</taxon>
        <taxon>Mycobacterium avium complex (MAC)</taxon>
    </lineage>
</organism>
<gene>
    <name evidence="1" type="primary">orn</name>
    <name type="ordered locus">MAP_2320</name>
</gene>
<keyword id="KW-0963">Cytoplasm</keyword>
<keyword id="KW-0269">Exonuclease</keyword>
<keyword id="KW-0378">Hydrolase</keyword>
<keyword id="KW-0540">Nuclease</keyword>
<keyword id="KW-1185">Reference proteome</keyword>
<dbReference type="EC" id="3.1.15.-" evidence="1"/>
<dbReference type="EMBL" id="AE016958">
    <property type="protein sequence ID" value="AAS04637.1"/>
    <property type="molecule type" value="Genomic_DNA"/>
</dbReference>
<dbReference type="RefSeq" id="WP_003873094.1">
    <property type="nucleotide sequence ID" value="NZ_CP106873.1"/>
</dbReference>
<dbReference type="SMR" id="P61651"/>
<dbReference type="STRING" id="262316.MAP_2320"/>
<dbReference type="KEGG" id="mpa:MAP_2320"/>
<dbReference type="eggNOG" id="COG1949">
    <property type="taxonomic scope" value="Bacteria"/>
</dbReference>
<dbReference type="HOGENOM" id="CLU_064761_3_0_11"/>
<dbReference type="Proteomes" id="UP000000580">
    <property type="component" value="Chromosome"/>
</dbReference>
<dbReference type="GO" id="GO:0005737">
    <property type="term" value="C:cytoplasm"/>
    <property type="evidence" value="ECO:0007669"/>
    <property type="project" value="UniProtKB-SubCell"/>
</dbReference>
<dbReference type="GO" id="GO:0000175">
    <property type="term" value="F:3'-5'-RNA exonuclease activity"/>
    <property type="evidence" value="ECO:0007669"/>
    <property type="project" value="InterPro"/>
</dbReference>
<dbReference type="GO" id="GO:0003676">
    <property type="term" value="F:nucleic acid binding"/>
    <property type="evidence" value="ECO:0007669"/>
    <property type="project" value="InterPro"/>
</dbReference>
<dbReference type="CDD" id="cd06135">
    <property type="entry name" value="Orn"/>
    <property type="match status" value="1"/>
</dbReference>
<dbReference type="FunFam" id="3.30.420.10:FF:000003">
    <property type="entry name" value="Oligoribonuclease"/>
    <property type="match status" value="1"/>
</dbReference>
<dbReference type="Gene3D" id="3.30.420.10">
    <property type="entry name" value="Ribonuclease H-like superfamily/Ribonuclease H"/>
    <property type="match status" value="1"/>
</dbReference>
<dbReference type="HAMAP" id="MF_00045">
    <property type="entry name" value="Oligoribonuclease"/>
    <property type="match status" value="1"/>
</dbReference>
<dbReference type="InterPro" id="IPR013520">
    <property type="entry name" value="Exonuclease_RNaseT/DNA_pol3"/>
</dbReference>
<dbReference type="InterPro" id="IPR022894">
    <property type="entry name" value="Oligoribonuclease"/>
</dbReference>
<dbReference type="InterPro" id="IPR012337">
    <property type="entry name" value="RNaseH-like_sf"/>
</dbReference>
<dbReference type="InterPro" id="IPR036397">
    <property type="entry name" value="RNaseH_sf"/>
</dbReference>
<dbReference type="NCBIfam" id="NF003765">
    <property type="entry name" value="PRK05359.1"/>
    <property type="match status" value="1"/>
</dbReference>
<dbReference type="PANTHER" id="PTHR11046">
    <property type="entry name" value="OLIGORIBONUCLEASE, MITOCHONDRIAL"/>
    <property type="match status" value="1"/>
</dbReference>
<dbReference type="PANTHER" id="PTHR11046:SF0">
    <property type="entry name" value="OLIGORIBONUCLEASE, MITOCHONDRIAL"/>
    <property type="match status" value="1"/>
</dbReference>
<dbReference type="Pfam" id="PF00929">
    <property type="entry name" value="RNase_T"/>
    <property type="match status" value="1"/>
</dbReference>
<dbReference type="SMART" id="SM00479">
    <property type="entry name" value="EXOIII"/>
    <property type="match status" value="1"/>
</dbReference>
<dbReference type="SUPFAM" id="SSF53098">
    <property type="entry name" value="Ribonuclease H-like"/>
    <property type="match status" value="1"/>
</dbReference>
<comment type="function">
    <text evidence="1">3'-to-5' exoribonuclease specific for small oligoribonucleotides.</text>
</comment>
<comment type="subcellular location">
    <subcellularLocation>
        <location evidence="1">Cytoplasm</location>
    </subcellularLocation>
</comment>
<comment type="similarity">
    <text evidence="1">Belongs to the oligoribonuclease family.</text>
</comment>
<proteinExistence type="inferred from homology"/>
<name>ORN_MYCPA</name>
<evidence type="ECO:0000255" key="1">
    <source>
        <dbReference type="HAMAP-Rule" id="MF_00045"/>
    </source>
</evidence>
<evidence type="ECO:0000256" key="2">
    <source>
        <dbReference type="SAM" id="MobiDB-lite"/>
    </source>
</evidence>